<comment type="function">
    <text evidence="1">Endoribonuclease; cleaves preferentially 3' to purine-pyrimidine dinucleotide motifs in single-stranded RNA. The cleavage product contains a free 3' -OH group. Has no activity with double-stranded RNA or DNA. Required for normal mitochondrial function and cell viability.</text>
</comment>
<comment type="cofactor">
    <cofactor evidence="1">
        <name>Zn(2+)</name>
        <dbReference type="ChEBI" id="CHEBI:29105"/>
    </cofactor>
    <text evidence="1">Binds 2 Zn(2+) ions per subunit.</text>
</comment>
<comment type="subcellular location">
    <subcellularLocation>
        <location evidence="1">Mitochondrion matrix</location>
    </subcellularLocation>
</comment>
<comment type="similarity">
    <text evidence="2">Belongs to the metallo-beta-lactamase superfamily. Glyoxalase II family.</text>
</comment>
<evidence type="ECO:0000250" key="1">
    <source>
        <dbReference type="UniProtKB" id="Q53H82"/>
    </source>
</evidence>
<evidence type="ECO:0000305" key="2"/>
<reference key="1">
    <citation type="submission" date="2004-02" db="EMBL/GenBank/DDBJ databases">
        <authorList>
            <consortium name="NIH - Zebrafish Gene Collection (ZGC) project"/>
        </authorList>
    </citation>
    <scope>NUCLEOTIDE SEQUENCE [LARGE SCALE MRNA]</scope>
    <source>
        <tissue>Kidney</tissue>
    </source>
</reference>
<name>LACB2_DANRE</name>
<organism>
    <name type="scientific">Danio rerio</name>
    <name type="common">Zebrafish</name>
    <name type="synonym">Brachydanio rerio</name>
    <dbReference type="NCBI Taxonomy" id="7955"/>
    <lineage>
        <taxon>Eukaryota</taxon>
        <taxon>Metazoa</taxon>
        <taxon>Chordata</taxon>
        <taxon>Craniata</taxon>
        <taxon>Vertebrata</taxon>
        <taxon>Euteleostomi</taxon>
        <taxon>Actinopterygii</taxon>
        <taxon>Neopterygii</taxon>
        <taxon>Teleostei</taxon>
        <taxon>Ostariophysi</taxon>
        <taxon>Cypriniformes</taxon>
        <taxon>Danionidae</taxon>
        <taxon>Danioninae</taxon>
        <taxon>Danio</taxon>
    </lineage>
</organism>
<feature type="chain" id="PRO_0000315746" description="Endoribonuclease LACTB2">
    <location>
        <begin position="1"/>
        <end position="289"/>
    </location>
</feature>
<feature type="binding site" evidence="1">
    <location>
        <position position="77"/>
    </location>
    <ligand>
        <name>Zn(2+)</name>
        <dbReference type="ChEBI" id="CHEBI:29105"/>
        <label>1</label>
    </ligand>
</feature>
<feature type="binding site" evidence="1">
    <location>
        <position position="79"/>
    </location>
    <ligand>
        <name>Zn(2+)</name>
        <dbReference type="ChEBI" id="CHEBI:29105"/>
        <label>1</label>
    </ligand>
</feature>
<feature type="binding site" evidence="1">
    <location>
        <position position="81"/>
    </location>
    <ligand>
        <name>Zn(2+)</name>
        <dbReference type="ChEBI" id="CHEBI:29105"/>
        <label>2</label>
    </ligand>
</feature>
<feature type="binding site" evidence="1">
    <location>
        <position position="82"/>
    </location>
    <ligand>
        <name>Zn(2+)</name>
        <dbReference type="ChEBI" id="CHEBI:29105"/>
        <label>2</label>
    </ligand>
</feature>
<feature type="binding site" evidence="1">
    <location>
        <position position="145"/>
    </location>
    <ligand>
        <name>Zn(2+)</name>
        <dbReference type="ChEBI" id="CHEBI:29105"/>
        <label>1</label>
    </ligand>
</feature>
<feature type="binding site" evidence="1">
    <location>
        <position position="164"/>
    </location>
    <ligand>
        <name>Zn(2+)</name>
        <dbReference type="ChEBI" id="CHEBI:29105"/>
        <label>1</label>
    </ligand>
</feature>
<feature type="binding site" evidence="1">
    <location>
        <position position="164"/>
    </location>
    <ligand>
        <name>Zn(2+)</name>
        <dbReference type="ChEBI" id="CHEBI:29105"/>
        <label>2</label>
    </ligand>
</feature>
<feature type="binding site" evidence="1">
    <location>
        <position position="199"/>
    </location>
    <ligand>
        <name>Zn(2+)</name>
        <dbReference type="ChEBI" id="CHEBI:29105"/>
        <label>2</label>
    </ligand>
</feature>
<gene>
    <name type="primary">lactb2</name>
    <name type="ORF">zgc:77065</name>
</gene>
<proteinExistence type="evidence at transcript level"/>
<sequence>MSAVIPRIEQLSARVVRVLGCNPGPMTLQGTNTYLVGTGRRRVLIDAGERAVPEYIVSLREALKQHDTSIQHIIVTHWHHDHTGGVQDILAHFNTDAELRVSKLPRCPPQEEIIGDDKKKYSYLNDGDVIQTEGATLRVLFTPGHTDDHMALLLEEEQAVFSGDCILGEGTAVFEDLHDYMKSLQKLLSIKADLIYPGHGPVVHDAGSKIHEYIIHRNAREQQILNVLLENSGTAFTSSELVKVVYKETPEHLHRAAEFNLLHHLRKLLKDGKICLAEGSDEKKWKSNL</sequence>
<accession>Q6NYF0</accession>
<dbReference type="EC" id="3.1.27.-" evidence="1"/>
<dbReference type="EMBL" id="BC066620">
    <property type="protein sequence ID" value="AAH66620.1"/>
    <property type="molecule type" value="mRNA"/>
</dbReference>
<dbReference type="RefSeq" id="NP_998049.1">
    <property type="nucleotide sequence ID" value="NM_212884.1"/>
</dbReference>
<dbReference type="SMR" id="Q6NYF0"/>
<dbReference type="FunCoup" id="Q6NYF0">
    <property type="interactions" value="1447"/>
</dbReference>
<dbReference type="PaxDb" id="7955-ENSDARP00000024616"/>
<dbReference type="GeneID" id="405820"/>
<dbReference type="KEGG" id="dre:405820"/>
<dbReference type="AGR" id="ZFIN:ZDB-GENE-040426-2257"/>
<dbReference type="CTD" id="51110"/>
<dbReference type="ZFIN" id="ZDB-GENE-040426-2257">
    <property type="gene designation" value="lactb2"/>
</dbReference>
<dbReference type="eggNOG" id="KOG0813">
    <property type="taxonomic scope" value="Eukaryota"/>
</dbReference>
<dbReference type="InParanoid" id="Q6NYF0"/>
<dbReference type="OrthoDB" id="17458at2759"/>
<dbReference type="PhylomeDB" id="Q6NYF0"/>
<dbReference type="PRO" id="PR:Q6NYF0"/>
<dbReference type="Proteomes" id="UP000000437">
    <property type="component" value="Unplaced"/>
</dbReference>
<dbReference type="GO" id="GO:0005759">
    <property type="term" value="C:mitochondrial matrix"/>
    <property type="evidence" value="ECO:0000250"/>
    <property type="project" value="UniProtKB"/>
</dbReference>
<dbReference type="GO" id="GO:0004521">
    <property type="term" value="F:RNA endonuclease activity"/>
    <property type="evidence" value="ECO:0000250"/>
    <property type="project" value="UniProtKB"/>
</dbReference>
<dbReference type="GO" id="GO:0003727">
    <property type="term" value="F:single-stranded RNA binding"/>
    <property type="evidence" value="ECO:0000250"/>
    <property type="project" value="UniProtKB"/>
</dbReference>
<dbReference type="GO" id="GO:0008270">
    <property type="term" value="F:zinc ion binding"/>
    <property type="evidence" value="ECO:0000250"/>
    <property type="project" value="UniProtKB"/>
</dbReference>
<dbReference type="CDD" id="cd07722">
    <property type="entry name" value="LACTB2-like_MBL-fold"/>
    <property type="match status" value="1"/>
</dbReference>
<dbReference type="FunFam" id="1.10.10.10:FF:000328">
    <property type="entry name" value="Lactamase beta 2"/>
    <property type="match status" value="1"/>
</dbReference>
<dbReference type="FunFam" id="3.60.15.10:FF:000017">
    <property type="entry name" value="Lactamase beta 2"/>
    <property type="match status" value="1"/>
</dbReference>
<dbReference type="Gene3D" id="3.60.15.10">
    <property type="entry name" value="Ribonuclease Z/Hydroxyacylglutathione hydrolase-like"/>
    <property type="match status" value="1"/>
</dbReference>
<dbReference type="Gene3D" id="1.10.10.10">
    <property type="entry name" value="Winged helix-like DNA-binding domain superfamily/Winged helix DNA-binding domain"/>
    <property type="match status" value="1"/>
</dbReference>
<dbReference type="InterPro" id="IPR047921">
    <property type="entry name" value="LACTB2-like_MBL-fold"/>
</dbReference>
<dbReference type="InterPro" id="IPR041516">
    <property type="entry name" value="LACTB2_WH"/>
</dbReference>
<dbReference type="InterPro" id="IPR001279">
    <property type="entry name" value="Metallo-B-lactamas"/>
</dbReference>
<dbReference type="InterPro" id="IPR036866">
    <property type="entry name" value="RibonucZ/Hydroxyglut_hydro"/>
</dbReference>
<dbReference type="InterPro" id="IPR050662">
    <property type="entry name" value="Sec-metab_biosynth-thioest"/>
</dbReference>
<dbReference type="InterPro" id="IPR036388">
    <property type="entry name" value="WH-like_DNA-bd_sf"/>
</dbReference>
<dbReference type="PANTHER" id="PTHR23131">
    <property type="entry name" value="ENDORIBONUCLEASE LACTB2"/>
    <property type="match status" value="1"/>
</dbReference>
<dbReference type="PANTHER" id="PTHR23131:SF0">
    <property type="entry name" value="ENDORIBONUCLEASE LACTB2"/>
    <property type="match status" value="1"/>
</dbReference>
<dbReference type="Pfam" id="PF17778">
    <property type="entry name" value="BLACT_WH"/>
    <property type="match status" value="1"/>
</dbReference>
<dbReference type="Pfam" id="PF00753">
    <property type="entry name" value="Lactamase_B"/>
    <property type="match status" value="1"/>
</dbReference>
<dbReference type="SMART" id="SM00849">
    <property type="entry name" value="Lactamase_B"/>
    <property type="match status" value="1"/>
</dbReference>
<dbReference type="SUPFAM" id="SSF56281">
    <property type="entry name" value="Metallo-hydrolase/oxidoreductase"/>
    <property type="match status" value="1"/>
</dbReference>
<keyword id="KW-0255">Endonuclease</keyword>
<keyword id="KW-0378">Hydrolase</keyword>
<keyword id="KW-0479">Metal-binding</keyword>
<keyword id="KW-0496">Mitochondrion</keyword>
<keyword id="KW-0540">Nuclease</keyword>
<keyword id="KW-1185">Reference proteome</keyword>
<keyword id="KW-0694">RNA-binding</keyword>
<keyword id="KW-0862">Zinc</keyword>
<protein>
    <recommendedName>
        <fullName evidence="1">Endoribonuclease LACTB2</fullName>
    </recommendedName>
    <alternativeName>
        <fullName>Beta-lactamase-like protein 2</fullName>
        <ecNumber evidence="1">3.1.27.-</ecNumber>
    </alternativeName>
</protein>